<name>LSPA_STAHJ</name>
<feature type="chain" id="PRO_0000289434" description="Lipoprotein signal peptidase">
    <location>
        <begin position="1"/>
        <end position="158"/>
    </location>
</feature>
<feature type="transmembrane region" description="Helical" evidence="1">
    <location>
        <begin position="4"/>
        <end position="24"/>
    </location>
</feature>
<feature type="transmembrane region" description="Helical" evidence="1">
    <location>
        <begin position="63"/>
        <end position="83"/>
    </location>
</feature>
<feature type="transmembrane region" description="Helical" evidence="1">
    <location>
        <begin position="88"/>
        <end position="108"/>
    </location>
</feature>
<feature type="transmembrane region" description="Helical" evidence="1">
    <location>
        <begin position="131"/>
        <end position="151"/>
    </location>
</feature>
<feature type="active site" evidence="1">
    <location>
        <position position="118"/>
    </location>
</feature>
<feature type="active site" evidence="1">
    <location>
        <position position="136"/>
    </location>
</feature>
<sequence>MKKKYYITISLIVAIAILIIDQVTKRIIATTMNIGDSYEVIPNFLNITSHRNNGAAWGILSGKMGFFYIITIVILIVLVLFYIKEAKYNLFMQVAISLLFAGALGNFIDRLVNGEVVDFVDTNIFGYDFPIFNVADSSLTIGVLFIIIALLKDANSKE</sequence>
<evidence type="ECO:0000255" key="1">
    <source>
        <dbReference type="HAMAP-Rule" id="MF_00161"/>
    </source>
</evidence>
<accession>Q4L5P8</accession>
<comment type="function">
    <text evidence="1">This protein specifically catalyzes the removal of signal peptides from prolipoproteins.</text>
</comment>
<comment type="catalytic activity">
    <reaction evidence="1">
        <text>Release of signal peptides from bacterial membrane prolipoproteins. Hydrolyzes -Xaa-Yaa-Zaa-|-(S,diacylglyceryl)Cys-, in which Xaa is hydrophobic (preferably Leu), and Yaa (Ala or Ser) and Zaa (Gly or Ala) have small, neutral side chains.</text>
        <dbReference type="EC" id="3.4.23.36"/>
    </reaction>
</comment>
<comment type="pathway">
    <text evidence="1">Protein modification; lipoprotein biosynthesis (signal peptide cleavage).</text>
</comment>
<comment type="subcellular location">
    <subcellularLocation>
        <location evidence="1">Cell membrane</location>
        <topology evidence="1">Multi-pass membrane protein</topology>
    </subcellularLocation>
</comment>
<comment type="similarity">
    <text evidence="1">Belongs to the peptidase A8 family.</text>
</comment>
<dbReference type="EC" id="3.4.23.36" evidence="1"/>
<dbReference type="EMBL" id="AP006716">
    <property type="protein sequence ID" value="BAE05027.1"/>
    <property type="molecule type" value="Genomic_DNA"/>
</dbReference>
<dbReference type="RefSeq" id="WP_011276003.1">
    <property type="nucleotide sequence ID" value="NC_007168.1"/>
</dbReference>
<dbReference type="SMR" id="Q4L5P8"/>
<dbReference type="GeneID" id="93781096"/>
<dbReference type="KEGG" id="sha:SH1718"/>
<dbReference type="eggNOG" id="COG0597">
    <property type="taxonomic scope" value="Bacteria"/>
</dbReference>
<dbReference type="HOGENOM" id="CLU_083252_3_0_9"/>
<dbReference type="OrthoDB" id="9810259at2"/>
<dbReference type="UniPathway" id="UPA00665"/>
<dbReference type="Proteomes" id="UP000000543">
    <property type="component" value="Chromosome"/>
</dbReference>
<dbReference type="GO" id="GO:0005886">
    <property type="term" value="C:plasma membrane"/>
    <property type="evidence" value="ECO:0007669"/>
    <property type="project" value="UniProtKB-SubCell"/>
</dbReference>
<dbReference type="GO" id="GO:0004190">
    <property type="term" value="F:aspartic-type endopeptidase activity"/>
    <property type="evidence" value="ECO:0007669"/>
    <property type="project" value="UniProtKB-UniRule"/>
</dbReference>
<dbReference type="GO" id="GO:0006508">
    <property type="term" value="P:proteolysis"/>
    <property type="evidence" value="ECO:0007669"/>
    <property type="project" value="UniProtKB-KW"/>
</dbReference>
<dbReference type="HAMAP" id="MF_00161">
    <property type="entry name" value="LspA"/>
    <property type="match status" value="1"/>
</dbReference>
<dbReference type="InterPro" id="IPR001872">
    <property type="entry name" value="Peptidase_A8"/>
</dbReference>
<dbReference type="NCBIfam" id="TIGR00077">
    <property type="entry name" value="lspA"/>
    <property type="match status" value="1"/>
</dbReference>
<dbReference type="PANTHER" id="PTHR33695">
    <property type="entry name" value="LIPOPROTEIN SIGNAL PEPTIDASE"/>
    <property type="match status" value="1"/>
</dbReference>
<dbReference type="PANTHER" id="PTHR33695:SF1">
    <property type="entry name" value="LIPOPROTEIN SIGNAL PEPTIDASE"/>
    <property type="match status" value="1"/>
</dbReference>
<dbReference type="Pfam" id="PF01252">
    <property type="entry name" value="Peptidase_A8"/>
    <property type="match status" value="1"/>
</dbReference>
<dbReference type="PRINTS" id="PR00781">
    <property type="entry name" value="LIPOSIGPTASE"/>
</dbReference>
<dbReference type="PROSITE" id="PS00855">
    <property type="entry name" value="SPASE_II"/>
    <property type="match status" value="1"/>
</dbReference>
<gene>
    <name evidence="1" type="primary">lspA</name>
    <name type="ordered locus">SH1718</name>
</gene>
<proteinExistence type="inferred from homology"/>
<reference key="1">
    <citation type="journal article" date="2005" name="J. Bacteriol.">
        <title>Whole-genome sequencing of Staphylococcus haemolyticus uncovers the extreme plasticity of its genome and the evolution of human-colonizing staphylococcal species.</title>
        <authorList>
            <person name="Takeuchi F."/>
            <person name="Watanabe S."/>
            <person name="Baba T."/>
            <person name="Yuzawa H."/>
            <person name="Ito T."/>
            <person name="Morimoto Y."/>
            <person name="Kuroda M."/>
            <person name="Cui L."/>
            <person name="Takahashi M."/>
            <person name="Ankai A."/>
            <person name="Baba S."/>
            <person name="Fukui S."/>
            <person name="Lee J.C."/>
            <person name="Hiramatsu K."/>
        </authorList>
    </citation>
    <scope>NUCLEOTIDE SEQUENCE [LARGE SCALE GENOMIC DNA]</scope>
    <source>
        <strain>JCSC1435</strain>
    </source>
</reference>
<protein>
    <recommendedName>
        <fullName evidence="1">Lipoprotein signal peptidase</fullName>
        <ecNumber evidence="1">3.4.23.36</ecNumber>
    </recommendedName>
    <alternativeName>
        <fullName evidence="1">Prolipoprotein signal peptidase</fullName>
    </alternativeName>
    <alternativeName>
        <fullName evidence="1">Signal peptidase II</fullName>
        <shortName evidence="1">SPase II</shortName>
    </alternativeName>
</protein>
<keyword id="KW-0064">Aspartyl protease</keyword>
<keyword id="KW-1003">Cell membrane</keyword>
<keyword id="KW-0378">Hydrolase</keyword>
<keyword id="KW-0472">Membrane</keyword>
<keyword id="KW-0645">Protease</keyword>
<keyword id="KW-0812">Transmembrane</keyword>
<keyword id="KW-1133">Transmembrane helix</keyword>
<organism>
    <name type="scientific">Staphylococcus haemolyticus (strain JCSC1435)</name>
    <dbReference type="NCBI Taxonomy" id="279808"/>
    <lineage>
        <taxon>Bacteria</taxon>
        <taxon>Bacillati</taxon>
        <taxon>Bacillota</taxon>
        <taxon>Bacilli</taxon>
        <taxon>Bacillales</taxon>
        <taxon>Staphylococcaceae</taxon>
        <taxon>Staphylococcus</taxon>
    </lineage>
</organism>